<protein>
    <recommendedName>
        <fullName evidence="1">SsrA-binding protein</fullName>
    </recommendedName>
    <alternativeName>
        <fullName evidence="1">Small protein B</fullName>
    </alternativeName>
</protein>
<gene>
    <name evidence="1" type="primary">smpB</name>
    <name type="ordered locus">CYA_1218</name>
</gene>
<proteinExistence type="inferred from homology"/>
<evidence type="ECO:0000255" key="1">
    <source>
        <dbReference type="HAMAP-Rule" id="MF_00023"/>
    </source>
</evidence>
<feature type="chain" id="PRO_1000002174" description="SsrA-binding protein">
    <location>
        <begin position="1"/>
        <end position="154"/>
    </location>
</feature>
<keyword id="KW-0963">Cytoplasm</keyword>
<keyword id="KW-0694">RNA-binding</keyword>
<name>SSRP_SYNJA</name>
<dbReference type="EMBL" id="CP000239">
    <property type="protein sequence ID" value="ABC99402.1"/>
    <property type="molecule type" value="Genomic_DNA"/>
</dbReference>
<dbReference type="RefSeq" id="WP_011430083.1">
    <property type="nucleotide sequence ID" value="NC_007775.1"/>
</dbReference>
<dbReference type="SMR" id="Q2JV45"/>
<dbReference type="STRING" id="321327.CYA_1218"/>
<dbReference type="KEGG" id="cya:CYA_1218"/>
<dbReference type="eggNOG" id="COG0691">
    <property type="taxonomic scope" value="Bacteria"/>
</dbReference>
<dbReference type="HOGENOM" id="CLU_108953_0_1_3"/>
<dbReference type="OrthoDB" id="9805462at2"/>
<dbReference type="Proteomes" id="UP000008818">
    <property type="component" value="Chromosome"/>
</dbReference>
<dbReference type="GO" id="GO:0005829">
    <property type="term" value="C:cytosol"/>
    <property type="evidence" value="ECO:0007669"/>
    <property type="project" value="TreeGrafter"/>
</dbReference>
<dbReference type="GO" id="GO:0003723">
    <property type="term" value="F:RNA binding"/>
    <property type="evidence" value="ECO:0007669"/>
    <property type="project" value="UniProtKB-UniRule"/>
</dbReference>
<dbReference type="GO" id="GO:0070929">
    <property type="term" value="P:trans-translation"/>
    <property type="evidence" value="ECO:0007669"/>
    <property type="project" value="UniProtKB-UniRule"/>
</dbReference>
<dbReference type="CDD" id="cd09294">
    <property type="entry name" value="SmpB"/>
    <property type="match status" value="1"/>
</dbReference>
<dbReference type="Gene3D" id="2.40.280.10">
    <property type="match status" value="1"/>
</dbReference>
<dbReference type="HAMAP" id="MF_00023">
    <property type="entry name" value="SmpB"/>
    <property type="match status" value="1"/>
</dbReference>
<dbReference type="InterPro" id="IPR023620">
    <property type="entry name" value="SmpB"/>
</dbReference>
<dbReference type="InterPro" id="IPR000037">
    <property type="entry name" value="SsrA-bd_prot"/>
</dbReference>
<dbReference type="InterPro" id="IPR020081">
    <property type="entry name" value="SsrA-bd_prot_CS"/>
</dbReference>
<dbReference type="NCBIfam" id="NF003843">
    <property type="entry name" value="PRK05422.1"/>
    <property type="match status" value="1"/>
</dbReference>
<dbReference type="NCBIfam" id="TIGR00086">
    <property type="entry name" value="smpB"/>
    <property type="match status" value="1"/>
</dbReference>
<dbReference type="PANTHER" id="PTHR30308:SF2">
    <property type="entry name" value="SSRA-BINDING PROTEIN"/>
    <property type="match status" value="1"/>
</dbReference>
<dbReference type="PANTHER" id="PTHR30308">
    <property type="entry name" value="TMRNA-BINDING COMPONENT OF TRANS-TRANSLATION TAGGING COMPLEX"/>
    <property type="match status" value="1"/>
</dbReference>
<dbReference type="Pfam" id="PF01668">
    <property type="entry name" value="SmpB"/>
    <property type="match status" value="1"/>
</dbReference>
<dbReference type="SUPFAM" id="SSF74982">
    <property type="entry name" value="Small protein B (SmpB)"/>
    <property type="match status" value="1"/>
</dbReference>
<dbReference type="PROSITE" id="PS01317">
    <property type="entry name" value="SSRP"/>
    <property type="match status" value="1"/>
</dbReference>
<comment type="function">
    <text evidence="1">Required for rescue of stalled ribosomes mediated by trans-translation. Binds to transfer-messenger RNA (tmRNA), required for stable association of tmRNA with ribosomes. tmRNA and SmpB together mimic tRNA shape, replacing the anticodon stem-loop with SmpB. tmRNA is encoded by the ssrA gene; the 2 termini fold to resemble tRNA(Ala) and it encodes a 'tag peptide', a short internal open reading frame. During trans-translation Ala-aminoacylated tmRNA acts like a tRNA, entering the A-site of stalled ribosomes, displacing the stalled mRNA. The ribosome then switches to translate the ORF on the tmRNA; the nascent peptide is terminated with the 'tag peptide' encoded by the tmRNA and targeted for degradation. The ribosome is freed to recommence translation, which seems to be the essential function of trans-translation.</text>
</comment>
<comment type="subcellular location">
    <subcellularLocation>
        <location evidence="1">Cytoplasm</location>
    </subcellularLocation>
    <text evidence="1">The tmRNA-SmpB complex associates with stalled 70S ribosomes.</text>
</comment>
<comment type="similarity">
    <text evidence="1">Belongs to the SmpB family.</text>
</comment>
<sequence>MAVDPNVKTLVENRRARFEYEILETYEAGIQLTGTEVKSIRAGKANLQDAFALFRDGEAWLHNLHVAPHGTASKVFNHDPTRRRKLLLHRREIDRLRGLVEQKGLTVVPLRLVLNRGWIKAHLGVARGKKLHDKRQAIKERETRREIQRELKGR</sequence>
<reference key="1">
    <citation type="journal article" date="2007" name="ISME J.">
        <title>Population level functional diversity in a microbial community revealed by comparative genomic and metagenomic analyses.</title>
        <authorList>
            <person name="Bhaya D."/>
            <person name="Grossman A.R."/>
            <person name="Steunou A.-S."/>
            <person name="Khuri N."/>
            <person name="Cohan F.M."/>
            <person name="Hamamura N."/>
            <person name="Melendrez M.C."/>
            <person name="Bateson M.M."/>
            <person name="Ward D.M."/>
            <person name="Heidelberg J.F."/>
        </authorList>
    </citation>
    <scope>NUCLEOTIDE SEQUENCE [LARGE SCALE GENOMIC DNA]</scope>
    <source>
        <strain>JA-3-3Ab</strain>
    </source>
</reference>
<organism>
    <name type="scientific">Synechococcus sp. (strain JA-3-3Ab)</name>
    <name type="common">Cyanobacteria bacterium Yellowstone A-Prime</name>
    <dbReference type="NCBI Taxonomy" id="321327"/>
    <lineage>
        <taxon>Bacteria</taxon>
        <taxon>Bacillati</taxon>
        <taxon>Cyanobacteriota</taxon>
        <taxon>Cyanophyceae</taxon>
        <taxon>Synechococcales</taxon>
        <taxon>Synechococcaceae</taxon>
        <taxon>Synechococcus</taxon>
    </lineage>
</organism>
<accession>Q2JV45</accession>